<dbReference type="EC" id="6.2.1.5" evidence="1"/>
<dbReference type="EMBL" id="AP006841">
    <property type="protein sequence ID" value="BAD49004.1"/>
    <property type="molecule type" value="Genomic_DNA"/>
</dbReference>
<dbReference type="RefSeq" id="WP_005777701.1">
    <property type="nucleotide sequence ID" value="NC_006347.1"/>
</dbReference>
<dbReference type="RefSeq" id="YP_099538.1">
    <property type="nucleotide sequence ID" value="NC_006347.1"/>
</dbReference>
<dbReference type="SMR" id="Q64U25"/>
<dbReference type="STRING" id="295405.BF2257"/>
<dbReference type="GeneID" id="60366284"/>
<dbReference type="KEGG" id="bfr:BF2257"/>
<dbReference type="PATRIC" id="fig|295405.11.peg.2188"/>
<dbReference type="HOGENOM" id="CLU_037430_0_2_10"/>
<dbReference type="OrthoDB" id="9802602at2"/>
<dbReference type="UniPathway" id="UPA00223">
    <property type="reaction ID" value="UER00999"/>
</dbReference>
<dbReference type="Proteomes" id="UP000002197">
    <property type="component" value="Chromosome"/>
</dbReference>
<dbReference type="GO" id="GO:0005829">
    <property type="term" value="C:cytosol"/>
    <property type="evidence" value="ECO:0007669"/>
    <property type="project" value="TreeGrafter"/>
</dbReference>
<dbReference type="GO" id="GO:0042709">
    <property type="term" value="C:succinate-CoA ligase complex"/>
    <property type="evidence" value="ECO:0007669"/>
    <property type="project" value="TreeGrafter"/>
</dbReference>
<dbReference type="GO" id="GO:0005524">
    <property type="term" value="F:ATP binding"/>
    <property type="evidence" value="ECO:0007669"/>
    <property type="project" value="UniProtKB-UniRule"/>
</dbReference>
<dbReference type="GO" id="GO:0000287">
    <property type="term" value="F:magnesium ion binding"/>
    <property type="evidence" value="ECO:0007669"/>
    <property type="project" value="UniProtKB-UniRule"/>
</dbReference>
<dbReference type="GO" id="GO:0004775">
    <property type="term" value="F:succinate-CoA ligase (ADP-forming) activity"/>
    <property type="evidence" value="ECO:0007669"/>
    <property type="project" value="UniProtKB-UniRule"/>
</dbReference>
<dbReference type="GO" id="GO:0004776">
    <property type="term" value="F:succinate-CoA ligase (GDP-forming) activity"/>
    <property type="evidence" value="ECO:0007669"/>
    <property type="project" value="RHEA"/>
</dbReference>
<dbReference type="GO" id="GO:0006104">
    <property type="term" value="P:succinyl-CoA metabolic process"/>
    <property type="evidence" value="ECO:0007669"/>
    <property type="project" value="TreeGrafter"/>
</dbReference>
<dbReference type="GO" id="GO:0006099">
    <property type="term" value="P:tricarboxylic acid cycle"/>
    <property type="evidence" value="ECO:0007669"/>
    <property type="project" value="UniProtKB-UniRule"/>
</dbReference>
<dbReference type="FunFam" id="3.30.470.20:FF:000002">
    <property type="entry name" value="Succinate--CoA ligase [ADP-forming] subunit beta"/>
    <property type="match status" value="1"/>
</dbReference>
<dbReference type="FunFam" id="3.40.50.261:FF:000007">
    <property type="entry name" value="Succinate--CoA ligase [ADP-forming] subunit beta"/>
    <property type="match status" value="1"/>
</dbReference>
<dbReference type="Gene3D" id="3.30.1490.20">
    <property type="entry name" value="ATP-grasp fold, A domain"/>
    <property type="match status" value="1"/>
</dbReference>
<dbReference type="Gene3D" id="3.30.470.20">
    <property type="entry name" value="ATP-grasp fold, B domain"/>
    <property type="match status" value="1"/>
</dbReference>
<dbReference type="Gene3D" id="3.40.50.261">
    <property type="entry name" value="Succinyl-CoA synthetase domains"/>
    <property type="match status" value="1"/>
</dbReference>
<dbReference type="HAMAP" id="MF_00558">
    <property type="entry name" value="Succ_CoA_beta"/>
    <property type="match status" value="1"/>
</dbReference>
<dbReference type="InterPro" id="IPR013650">
    <property type="entry name" value="ATP-grasp_succ-CoA_synth-type"/>
</dbReference>
<dbReference type="InterPro" id="IPR013815">
    <property type="entry name" value="ATP_grasp_subdomain_1"/>
</dbReference>
<dbReference type="InterPro" id="IPR017866">
    <property type="entry name" value="Succ-CoA_synthase_bsu_CS"/>
</dbReference>
<dbReference type="InterPro" id="IPR005811">
    <property type="entry name" value="SUCC_ACL_C"/>
</dbReference>
<dbReference type="InterPro" id="IPR005809">
    <property type="entry name" value="Succ_CoA_ligase-like_bsu"/>
</dbReference>
<dbReference type="InterPro" id="IPR016102">
    <property type="entry name" value="Succinyl-CoA_synth-like"/>
</dbReference>
<dbReference type="NCBIfam" id="NF001913">
    <property type="entry name" value="PRK00696.1"/>
    <property type="match status" value="1"/>
</dbReference>
<dbReference type="NCBIfam" id="TIGR01016">
    <property type="entry name" value="sucCoAbeta"/>
    <property type="match status" value="1"/>
</dbReference>
<dbReference type="PANTHER" id="PTHR11815:SF10">
    <property type="entry name" value="SUCCINATE--COA LIGASE [GDP-FORMING] SUBUNIT BETA, MITOCHONDRIAL"/>
    <property type="match status" value="1"/>
</dbReference>
<dbReference type="PANTHER" id="PTHR11815">
    <property type="entry name" value="SUCCINYL-COA SYNTHETASE BETA CHAIN"/>
    <property type="match status" value="1"/>
</dbReference>
<dbReference type="Pfam" id="PF08442">
    <property type="entry name" value="ATP-grasp_2"/>
    <property type="match status" value="1"/>
</dbReference>
<dbReference type="Pfam" id="PF00549">
    <property type="entry name" value="Ligase_CoA"/>
    <property type="match status" value="1"/>
</dbReference>
<dbReference type="PIRSF" id="PIRSF001554">
    <property type="entry name" value="SucCS_beta"/>
    <property type="match status" value="1"/>
</dbReference>
<dbReference type="SUPFAM" id="SSF56059">
    <property type="entry name" value="Glutathione synthetase ATP-binding domain-like"/>
    <property type="match status" value="1"/>
</dbReference>
<dbReference type="SUPFAM" id="SSF52210">
    <property type="entry name" value="Succinyl-CoA synthetase domains"/>
    <property type="match status" value="1"/>
</dbReference>
<dbReference type="PROSITE" id="PS01217">
    <property type="entry name" value="SUCCINYL_COA_LIG_3"/>
    <property type="match status" value="1"/>
</dbReference>
<feature type="chain" id="PRO_1000082012" description="Succinate--CoA ligase [ADP-forming] subunit beta">
    <location>
        <begin position="1"/>
        <end position="382"/>
    </location>
</feature>
<feature type="binding site" evidence="1">
    <location>
        <position position="46"/>
    </location>
    <ligand>
        <name>ATP</name>
        <dbReference type="ChEBI" id="CHEBI:30616"/>
    </ligand>
</feature>
<feature type="binding site" evidence="1">
    <location>
        <begin position="53"/>
        <end position="55"/>
    </location>
    <ligand>
        <name>ATP</name>
        <dbReference type="ChEBI" id="CHEBI:30616"/>
    </ligand>
</feature>
<feature type="binding site" evidence="1">
    <location>
        <position position="95"/>
    </location>
    <ligand>
        <name>ATP</name>
        <dbReference type="ChEBI" id="CHEBI:30616"/>
    </ligand>
</feature>
<feature type="binding site" evidence="1">
    <location>
        <position position="100"/>
    </location>
    <ligand>
        <name>ATP</name>
        <dbReference type="ChEBI" id="CHEBI:30616"/>
    </ligand>
</feature>
<feature type="binding site" evidence="1">
    <location>
        <position position="192"/>
    </location>
    <ligand>
        <name>Mg(2+)</name>
        <dbReference type="ChEBI" id="CHEBI:18420"/>
    </ligand>
</feature>
<feature type="binding site" evidence="1">
    <location>
        <position position="206"/>
    </location>
    <ligand>
        <name>Mg(2+)</name>
        <dbReference type="ChEBI" id="CHEBI:18420"/>
    </ligand>
</feature>
<feature type="binding site" evidence="1">
    <location>
        <position position="257"/>
    </location>
    <ligand>
        <name>substrate</name>
        <note>ligand shared with subunit alpha</note>
    </ligand>
</feature>
<feature type="binding site" evidence="1">
    <location>
        <begin position="314"/>
        <end position="316"/>
    </location>
    <ligand>
        <name>substrate</name>
        <note>ligand shared with subunit alpha</note>
    </ligand>
</feature>
<name>SUCC_BACFR</name>
<proteinExistence type="inferred from homology"/>
<reference key="1">
    <citation type="journal article" date="2004" name="Proc. Natl. Acad. Sci. U.S.A.">
        <title>Genomic analysis of Bacteroides fragilis reveals extensive DNA inversions regulating cell surface adaptation.</title>
        <authorList>
            <person name="Kuwahara T."/>
            <person name="Yamashita A."/>
            <person name="Hirakawa H."/>
            <person name="Nakayama H."/>
            <person name="Toh H."/>
            <person name="Okada N."/>
            <person name="Kuhara S."/>
            <person name="Hattori M."/>
            <person name="Hayashi T."/>
            <person name="Ohnishi Y."/>
        </authorList>
    </citation>
    <scope>NUCLEOTIDE SEQUENCE [LARGE SCALE GENOMIC DNA]</scope>
    <source>
        <strain>YCH46</strain>
    </source>
</reference>
<gene>
    <name evidence="1" type="primary">sucC</name>
    <name type="ordered locus">BF2257</name>
</gene>
<protein>
    <recommendedName>
        <fullName evidence="1">Succinate--CoA ligase [ADP-forming] subunit beta</fullName>
        <ecNumber evidence="1">6.2.1.5</ecNumber>
    </recommendedName>
    <alternativeName>
        <fullName evidence="1">Succinyl-CoA synthetase subunit beta</fullName>
        <shortName evidence="1">SCS-beta</shortName>
    </alternativeName>
</protein>
<sequence length="382" mass="42177">MKVHEYQAKEIFSTYGIPVERHALCHTADGAVAAYHRMGVNRVAIKAQVLTGGRGKAGGVKLANNDRDVYQYAQTILEMTIKGYPVTKILLSEAVNIAAEYYISFTIDRNTRSVTLIMSAAGGMDIEEVARQSPEKIIRCSIDPLIGVPDYLAHKFAFSLFEQAEQANRMATIIQDLYKAFIEKDASLAEINPLVLTPVGTLLAIDAKMVFDDNALYRHPDLQKLSEPTEDEKLEAIAKERGFSYVRMDGEIGCMVNGAGLAMTTMDMIKLYGGNPANFLDIGGSSNPVKVIEAMRLLLDDKKVKVVFINIFGGITRCDDVAIGLLQAFEQIQTDIPIIVRLTGTNGNMGRELLRKNNRFQVAQTMEEATKMAIESLKKESI</sequence>
<accession>Q64U25</accession>
<keyword id="KW-0067">ATP-binding</keyword>
<keyword id="KW-0436">Ligase</keyword>
<keyword id="KW-0460">Magnesium</keyword>
<keyword id="KW-0479">Metal-binding</keyword>
<keyword id="KW-0547">Nucleotide-binding</keyword>
<keyword id="KW-0816">Tricarboxylic acid cycle</keyword>
<organism>
    <name type="scientific">Bacteroides fragilis (strain YCH46)</name>
    <dbReference type="NCBI Taxonomy" id="295405"/>
    <lineage>
        <taxon>Bacteria</taxon>
        <taxon>Pseudomonadati</taxon>
        <taxon>Bacteroidota</taxon>
        <taxon>Bacteroidia</taxon>
        <taxon>Bacteroidales</taxon>
        <taxon>Bacteroidaceae</taxon>
        <taxon>Bacteroides</taxon>
    </lineage>
</organism>
<evidence type="ECO:0000255" key="1">
    <source>
        <dbReference type="HAMAP-Rule" id="MF_00558"/>
    </source>
</evidence>
<comment type="function">
    <text evidence="1">Succinyl-CoA synthetase functions in the citric acid cycle (TCA), coupling the hydrolysis of succinyl-CoA to the synthesis of either ATP or GTP and thus represents the only step of substrate-level phosphorylation in the TCA. The beta subunit provides nucleotide specificity of the enzyme and binds the substrate succinate, while the binding sites for coenzyme A and phosphate are found in the alpha subunit.</text>
</comment>
<comment type="catalytic activity">
    <reaction evidence="1">
        <text>succinate + ATP + CoA = succinyl-CoA + ADP + phosphate</text>
        <dbReference type="Rhea" id="RHEA:17661"/>
        <dbReference type="ChEBI" id="CHEBI:30031"/>
        <dbReference type="ChEBI" id="CHEBI:30616"/>
        <dbReference type="ChEBI" id="CHEBI:43474"/>
        <dbReference type="ChEBI" id="CHEBI:57287"/>
        <dbReference type="ChEBI" id="CHEBI:57292"/>
        <dbReference type="ChEBI" id="CHEBI:456216"/>
        <dbReference type="EC" id="6.2.1.5"/>
    </reaction>
    <physiologicalReaction direction="right-to-left" evidence="1">
        <dbReference type="Rhea" id="RHEA:17663"/>
    </physiologicalReaction>
</comment>
<comment type="catalytic activity">
    <reaction evidence="1">
        <text>GTP + succinate + CoA = succinyl-CoA + GDP + phosphate</text>
        <dbReference type="Rhea" id="RHEA:22120"/>
        <dbReference type="ChEBI" id="CHEBI:30031"/>
        <dbReference type="ChEBI" id="CHEBI:37565"/>
        <dbReference type="ChEBI" id="CHEBI:43474"/>
        <dbReference type="ChEBI" id="CHEBI:57287"/>
        <dbReference type="ChEBI" id="CHEBI:57292"/>
        <dbReference type="ChEBI" id="CHEBI:58189"/>
    </reaction>
    <physiologicalReaction direction="right-to-left" evidence="1">
        <dbReference type="Rhea" id="RHEA:22122"/>
    </physiologicalReaction>
</comment>
<comment type="cofactor">
    <cofactor evidence="1">
        <name>Mg(2+)</name>
        <dbReference type="ChEBI" id="CHEBI:18420"/>
    </cofactor>
    <text evidence="1">Binds 1 Mg(2+) ion per subunit.</text>
</comment>
<comment type="pathway">
    <text evidence="1">Carbohydrate metabolism; tricarboxylic acid cycle; succinate from succinyl-CoA (ligase route): step 1/1.</text>
</comment>
<comment type="subunit">
    <text evidence="1">Heterotetramer of two alpha and two beta subunits.</text>
</comment>
<comment type="similarity">
    <text evidence="1">Belongs to the succinate/malate CoA ligase beta subunit family.</text>
</comment>